<protein>
    <recommendedName>
        <fullName evidence="1 3">DNA ligase</fullName>
        <ecNumber evidence="2">6.5.1.7</ecNumber>
    </recommendedName>
    <alternativeName>
        <fullName evidence="4">Polydeoxyribonucleotide synthase [ATP/ADP/GTP]</fullName>
    </alternativeName>
</protein>
<reference key="1">
    <citation type="journal article" date="2007" name="Archaea">
        <title>The genome of Hyperthermus butylicus: a sulfur-reducing, peptide fermenting, neutrophilic Crenarchaeote growing up to 108 degrees C.</title>
        <authorList>
            <person name="Bruegger K."/>
            <person name="Chen L."/>
            <person name="Stark M."/>
            <person name="Zibat A."/>
            <person name="Redder P."/>
            <person name="Ruepp A."/>
            <person name="Awayez M."/>
            <person name="She Q."/>
            <person name="Garrett R.A."/>
            <person name="Klenk H.-P."/>
        </authorList>
    </citation>
    <scope>NUCLEOTIDE SEQUENCE [LARGE SCALE GENOMIC DNA]</scope>
    <source>
        <strain>DSM 5456 / JCM 9403 / PLM1-5</strain>
    </source>
</reference>
<reference key="2">
    <citation type="journal article" date="2013" name="Extremophiles">
        <title>Broad nucleotide cofactor specificity of DNA ligase from the hyperthermophilic crenarchaeon Hyperthermus butylicus and its evolutionary significance.</title>
        <authorList>
            <person name="Kim J.H."/>
            <person name="Lee K.K."/>
            <person name="Sun Y."/>
            <person name="Seo G.J."/>
            <person name="Cho S.S."/>
            <person name="Kwon S.H."/>
            <person name="Kwon S.T."/>
        </authorList>
    </citation>
    <scope>FUNCTION</scope>
    <scope>CATALYTIC ACTIVITY</scope>
    <scope>COFACTOR</scope>
    <scope>BIOPHYSICOCHEMICAL PROPERTIES</scope>
    <source>
        <strain>DSM 5456 / JCM 9403 / PLM1-5</strain>
    </source>
</reference>
<keyword id="KW-0067">ATP-binding</keyword>
<keyword id="KW-0131">Cell cycle</keyword>
<keyword id="KW-0132">Cell division</keyword>
<keyword id="KW-0227">DNA damage</keyword>
<keyword id="KW-0233">DNA recombination</keyword>
<keyword id="KW-0234">DNA repair</keyword>
<keyword id="KW-0235">DNA replication</keyword>
<keyword id="KW-0342">GTP-binding</keyword>
<keyword id="KW-0436">Ligase</keyword>
<keyword id="KW-0460">Magnesium</keyword>
<keyword id="KW-0464">Manganese</keyword>
<keyword id="KW-0479">Metal-binding</keyword>
<keyword id="KW-0547">Nucleotide-binding</keyword>
<keyword id="KW-1185">Reference proteome</keyword>
<comment type="function">
    <text evidence="2">DNA ligase that seals nicks in double-stranded DNA during DNA replication, DNA recombination and DNA repair. Can use ATP, ADP and GTP, but not CTP, TTP or NAD(+).</text>
</comment>
<comment type="catalytic activity">
    <reaction evidence="1 2">
        <text>ATP + (deoxyribonucleotide)n-3'-hydroxyl + 5'-phospho-(deoxyribonucleotide)m = (deoxyribonucleotide)n+m + AMP + diphosphate.</text>
        <dbReference type="EC" id="6.5.1.7"/>
    </reaction>
</comment>
<comment type="catalytic activity">
    <reaction evidence="2">
        <text>ADP + (deoxyribonucleotide)n-3'-hydroxyl + 5'-phospho-(deoxyribonucleotide)m = (deoxyribonucleotide)n+m + AMP + phosphate.</text>
        <dbReference type="EC" id="6.5.1.7"/>
    </reaction>
</comment>
<comment type="catalytic activity">
    <reaction evidence="2">
        <text>GTP + (deoxyribonucleotide)n-3'-hydroxyl + 5'-phospho-(deoxyribonucleotide)m = (deoxyribonucleotide)n+m + GMP + diphosphate.</text>
        <dbReference type="EC" id="6.5.1.7"/>
    </reaction>
</comment>
<comment type="cofactor">
    <cofactor evidence="2">
        <name>Mg(2+)</name>
        <dbReference type="ChEBI" id="CHEBI:18420"/>
    </cofactor>
    <cofactor evidence="2">
        <name>Mn(2+)</name>
        <dbReference type="ChEBI" id="CHEBI:29035"/>
    </cofactor>
</comment>
<comment type="biophysicochemical properties">
    <phDependence>
        <text evidence="2">Optimum pH is 8.0.</text>
    </phDependence>
    <temperatureDependence>
        <text evidence="2">Optimum temperature is 75 degrees Celsius.</text>
    </temperatureDependence>
</comment>
<comment type="similarity">
    <text evidence="1 4">Belongs to the ATP-dependent DNA ligase family.</text>
</comment>
<sequence>MSMPFSVLAETFEKLERVTARTQMLLYLVELFKKTPPEIIDKVVYFIQGKLWPDWKGLPELGIGEKMLIKAASIALHVSEKQIEQLVKKLGDTGKAIEMIKREKQQKQKAVGLLAFMQKPSGGESTLTVEKVYDTLARIALVQGEGSRDIKLKLLAGLLAEASPREAKYIARFVEGRLRLGVGDATIMEALAVVYGGSAAMRSVVERAYNLRADLGMVAKILATQGIDALKNIKPEVGVPIRPMLAERLNDPVEIIKKLGGRALVEYKYDGERAQIHKKGDKIWIFSRRLENITHMYPDVVEMAKKGIKAEEAIVEGEIVAIDPETGEFRPFQVLMHRRRKKDVHAVLSEIPVAVFLFDTLYVNGEDLTLKPLPARHEVLEKIIEQSDTWRIAEGIVTSDPQELESFFLKAIEDGAEGVMAKAIHDRSIYQAGARGWLWIKYKRDYKSEMSDTVDLVVIGAFYGKGRRGGKFGALLMAAYDPDTDTFKSVCKVGSGFTDEDLERLDDMLKPYISDKKPARVDSQMKPDVWVEPTLVAEIIGAELTLSPIHTCCYGWVKSGAGISIRFPRFIRWRPDKGPEDATTTKELYEMYKRQLRRIKEEEAPTGV</sequence>
<organism>
    <name type="scientific">Hyperthermus butylicus (strain DSM 5456 / JCM 9403 / PLM1-5)</name>
    <dbReference type="NCBI Taxonomy" id="415426"/>
    <lineage>
        <taxon>Archaea</taxon>
        <taxon>Thermoproteota</taxon>
        <taxon>Thermoprotei</taxon>
        <taxon>Desulfurococcales</taxon>
        <taxon>Pyrodictiaceae</taxon>
        <taxon>Hyperthermus</taxon>
    </lineage>
</organism>
<dbReference type="EC" id="6.5.1.7" evidence="2"/>
<dbReference type="EMBL" id="CP000493">
    <property type="protein sequence ID" value="ABM80287.1"/>
    <property type="molecule type" value="Genomic_DNA"/>
</dbReference>
<dbReference type="RefSeq" id="WP_011821605.1">
    <property type="nucleotide sequence ID" value="NC_008818.1"/>
</dbReference>
<dbReference type="SMR" id="A2BJX6"/>
<dbReference type="STRING" id="415426.Hbut_0421"/>
<dbReference type="EnsemblBacteria" id="ABM80287">
    <property type="protein sequence ID" value="ABM80287"/>
    <property type="gene ID" value="Hbut_0421"/>
</dbReference>
<dbReference type="GeneID" id="4781994"/>
<dbReference type="KEGG" id="hbu:Hbut_0421"/>
<dbReference type="eggNOG" id="arCOG01347">
    <property type="taxonomic scope" value="Archaea"/>
</dbReference>
<dbReference type="HOGENOM" id="CLU_005138_6_0_2"/>
<dbReference type="OrthoDB" id="31274at2157"/>
<dbReference type="Proteomes" id="UP000002593">
    <property type="component" value="Chromosome"/>
</dbReference>
<dbReference type="GO" id="GO:0005524">
    <property type="term" value="F:ATP binding"/>
    <property type="evidence" value="ECO:0007669"/>
    <property type="project" value="UniProtKB-UniRule"/>
</dbReference>
<dbReference type="GO" id="GO:0003677">
    <property type="term" value="F:DNA binding"/>
    <property type="evidence" value="ECO:0007669"/>
    <property type="project" value="InterPro"/>
</dbReference>
<dbReference type="GO" id="GO:0003910">
    <property type="term" value="F:DNA ligase (ATP) activity"/>
    <property type="evidence" value="ECO:0007669"/>
    <property type="project" value="UniProtKB-UniRule"/>
</dbReference>
<dbReference type="GO" id="GO:0005525">
    <property type="term" value="F:GTP binding"/>
    <property type="evidence" value="ECO:0007669"/>
    <property type="project" value="UniProtKB-KW"/>
</dbReference>
<dbReference type="GO" id="GO:0046872">
    <property type="term" value="F:metal ion binding"/>
    <property type="evidence" value="ECO:0007669"/>
    <property type="project" value="UniProtKB-KW"/>
</dbReference>
<dbReference type="GO" id="GO:0051301">
    <property type="term" value="P:cell division"/>
    <property type="evidence" value="ECO:0007669"/>
    <property type="project" value="UniProtKB-KW"/>
</dbReference>
<dbReference type="GO" id="GO:0071897">
    <property type="term" value="P:DNA biosynthetic process"/>
    <property type="evidence" value="ECO:0007669"/>
    <property type="project" value="InterPro"/>
</dbReference>
<dbReference type="GO" id="GO:0006310">
    <property type="term" value="P:DNA recombination"/>
    <property type="evidence" value="ECO:0007669"/>
    <property type="project" value="UniProtKB-UniRule"/>
</dbReference>
<dbReference type="GO" id="GO:0006281">
    <property type="term" value="P:DNA repair"/>
    <property type="evidence" value="ECO:0007669"/>
    <property type="project" value="UniProtKB-UniRule"/>
</dbReference>
<dbReference type="GO" id="GO:0006273">
    <property type="term" value="P:lagging strand elongation"/>
    <property type="evidence" value="ECO:0007669"/>
    <property type="project" value="TreeGrafter"/>
</dbReference>
<dbReference type="CDD" id="cd07901">
    <property type="entry name" value="Adenylation_DNA_ligase_Arch_LigB"/>
    <property type="match status" value="1"/>
</dbReference>
<dbReference type="CDD" id="cd07969">
    <property type="entry name" value="OBF_DNA_ligase_I"/>
    <property type="match status" value="1"/>
</dbReference>
<dbReference type="FunFam" id="1.10.3260.10:FF:000007">
    <property type="entry name" value="DNA ligase"/>
    <property type="match status" value="1"/>
</dbReference>
<dbReference type="FunFam" id="2.40.50.140:FF:000062">
    <property type="entry name" value="DNA ligase"/>
    <property type="match status" value="1"/>
</dbReference>
<dbReference type="FunFam" id="3.30.470.30:FF:000012">
    <property type="entry name" value="Probable DNA ligase"/>
    <property type="match status" value="1"/>
</dbReference>
<dbReference type="Gene3D" id="1.10.3260.10">
    <property type="entry name" value="DNA ligase, ATP-dependent, N-terminal domain"/>
    <property type="match status" value="1"/>
</dbReference>
<dbReference type="Gene3D" id="3.30.470.30">
    <property type="entry name" value="DNA ligase/mRNA capping enzyme"/>
    <property type="match status" value="1"/>
</dbReference>
<dbReference type="Gene3D" id="2.40.50.140">
    <property type="entry name" value="Nucleic acid-binding proteins"/>
    <property type="match status" value="1"/>
</dbReference>
<dbReference type="HAMAP" id="MF_00407">
    <property type="entry name" value="DNA_ligase"/>
    <property type="match status" value="1"/>
</dbReference>
<dbReference type="InterPro" id="IPR050191">
    <property type="entry name" value="ATP-dep_DNA_ligase"/>
</dbReference>
<dbReference type="InterPro" id="IPR022865">
    <property type="entry name" value="DNA_ligae_ATP-dep_bac/arc"/>
</dbReference>
<dbReference type="InterPro" id="IPR000977">
    <property type="entry name" value="DNA_ligase_ATP-dep"/>
</dbReference>
<dbReference type="InterPro" id="IPR012309">
    <property type="entry name" value="DNA_ligase_ATP-dep_C"/>
</dbReference>
<dbReference type="InterPro" id="IPR012310">
    <property type="entry name" value="DNA_ligase_ATP-dep_cent"/>
</dbReference>
<dbReference type="InterPro" id="IPR016059">
    <property type="entry name" value="DNA_ligase_ATP-dep_CS"/>
</dbReference>
<dbReference type="InterPro" id="IPR012308">
    <property type="entry name" value="DNA_ligase_ATP-dep_N"/>
</dbReference>
<dbReference type="InterPro" id="IPR036599">
    <property type="entry name" value="DNA_ligase_N_sf"/>
</dbReference>
<dbReference type="InterPro" id="IPR012340">
    <property type="entry name" value="NA-bd_OB-fold"/>
</dbReference>
<dbReference type="NCBIfam" id="TIGR00574">
    <property type="entry name" value="dnl1"/>
    <property type="match status" value="1"/>
</dbReference>
<dbReference type="PANTHER" id="PTHR45674:SF4">
    <property type="entry name" value="DNA LIGASE 1"/>
    <property type="match status" value="1"/>
</dbReference>
<dbReference type="PANTHER" id="PTHR45674">
    <property type="entry name" value="DNA LIGASE 1/3 FAMILY MEMBER"/>
    <property type="match status" value="1"/>
</dbReference>
<dbReference type="Pfam" id="PF04679">
    <property type="entry name" value="DNA_ligase_A_C"/>
    <property type="match status" value="1"/>
</dbReference>
<dbReference type="Pfam" id="PF01068">
    <property type="entry name" value="DNA_ligase_A_M"/>
    <property type="match status" value="1"/>
</dbReference>
<dbReference type="Pfam" id="PF04675">
    <property type="entry name" value="DNA_ligase_A_N"/>
    <property type="match status" value="1"/>
</dbReference>
<dbReference type="SUPFAM" id="SSF117018">
    <property type="entry name" value="ATP-dependent DNA ligase DNA-binding domain"/>
    <property type="match status" value="1"/>
</dbReference>
<dbReference type="SUPFAM" id="SSF56091">
    <property type="entry name" value="DNA ligase/mRNA capping enzyme, catalytic domain"/>
    <property type="match status" value="1"/>
</dbReference>
<dbReference type="SUPFAM" id="SSF50249">
    <property type="entry name" value="Nucleic acid-binding proteins"/>
    <property type="match status" value="1"/>
</dbReference>
<dbReference type="PROSITE" id="PS00697">
    <property type="entry name" value="DNA_LIGASE_A1"/>
    <property type="match status" value="1"/>
</dbReference>
<dbReference type="PROSITE" id="PS00333">
    <property type="entry name" value="DNA_LIGASE_A2"/>
    <property type="match status" value="1"/>
</dbReference>
<dbReference type="PROSITE" id="PS50160">
    <property type="entry name" value="DNA_LIGASE_A3"/>
    <property type="match status" value="1"/>
</dbReference>
<name>DNLI_HYPBU</name>
<gene>
    <name evidence="1" type="primary">lig</name>
    <name type="ordered locus">Hbut_0421</name>
</gene>
<evidence type="ECO:0000255" key="1">
    <source>
        <dbReference type="HAMAP-Rule" id="MF_00407"/>
    </source>
</evidence>
<evidence type="ECO:0000269" key="2">
    <source>
    </source>
</evidence>
<evidence type="ECO:0000303" key="3">
    <source>
    </source>
</evidence>
<evidence type="ECO:0000305" key="4"/>
<proteinExistence type="evidence at protein level"/>
<feature type="chain" id="PRO_0000365248" description="DNA ligase">
    <location>
        <begin position="1"/>
        <end position="608"/>
    </location>
</feature>
<feature type="active site" description="N6-AMP-lysine intermediate" evidence="1">
    <location>
        <position position="268"/>
    </location>
</feature>
<feature type="binding site" evidence="1">
    <location>
        <position position="266"/>
    </location>
    <ligand>
        <name>ATP</name>
        <dbReference type="ChEBI" id="CHEBI:30616"/>
    </ligand>
</feature>
<feature type="binding site" evidence="1">
    <location>
        <position position="273"/>
    </location>
    <ligand>
        <name>ATP</name>
        <dbReference type="ChEBI" id="CHEBI:30616"/>
    </ligand>
</feature>
<feature type="binding site" evidence="1">
    <location>
        <position position="288"/>
    </location>
    <ligand>
        <name>ATP</name>
        <dbReference type="ChEBI" id="CHEBI:30616"/>
    </ligand>
</feature>
<feature type="binding site" evidence="1">
    <location>
        <position position="318"/>
    </location>
    <ligand>
        <name>ATP</name>
        <dbReference type="ChEBI" id="CHEBI:30616"/>
    </ligand>
</feature>
<feature type="binding site" evidence="1">
    <location>
        <position position="358"/>
    </location>
    <ligand>
        <name>ATP</name>
        <dbReference type="ChEBI" id="CHEBI:30616"/>
    </ligand>
</feature>
<feature type="binding site" evidence="1">
    <location>
        <position position="435"/>
    </location>
    <ligand>
        <name>ATP</name>
        <dbReference type="ChEBI" id="CHEBI:30616"/>
    </ligand>
</feature>
<feature type="binding site" evidence="1">
    <location>
        <position position="441"/>
    </location>
    <ligand>
        <name>ATP</name>
        <dbReference type="ChEBI" id="CHEBI:30616"/>
    </ligand>
</feature>
<accession>A2BJX6</accession>